<organism>
    <name type="scientific">Streptomyces avermitilis (strain ATCC 31267 / DSM 46492 / JCM 5070 / NBRC 14893 / NCIMB 12804 / NRRL 8165 / MA-4680)</name>
    <dbReference type="NCBI Taxonomy" id="227882"/>
    <lineage>
        <taxon>Bacteria</taxon>
        <taxon>Bacillati</taxon>
        <taxon>Actinomycetota</taxon>
        <taxon>Actinomycetes</taxon>
        <taxon>Kitasatosporales</taxon>
        <taxon>Streptomycetaceae</taxon>
        <taxon>Streptomyces</taxon>
    </lineage>
</organism>
<feature type="chain" id="PRO_0000109729" description="Glutamate 5-kinase">
    <location>
        <begin position="1"/>
        <end position="375"/>
    </location>
</feature>
<feature type="domain" description="PUA" evidence="1">
    <location>
        <begin position="281"/>
        <end position="359"/>
    </location>
</feature>
<feature type="binding site" evidence="1">
    <location>
        <position position="17"/>
    </location>
    <ligand>
        <name>ATP</name>
        <dbReference type="ChEBI" id="CHEBI:30616"/>
    </ligand>
</feature>
<feature type="binding site" evidence="1">
    <location>
        <position position="58"/>
    </location>
    <ligand>
        <name>substrate</name>
    </ligand>
</feature>
<feature type="binding site" evidence="1">
    <location>
        <position position="145"/>
    </location>
    <ligand>
        <name>substrate</name>
    </ligand>
</feature>
<feature type="binding site" evidence="1">
    <location>
        <position position="157"/>
    </location>
    <ligand>
        <name>substrate</name>
    </ligand>
</feature>
<feature type="binding site" evidence="1">
    <location>
        <begin position="177"/>
        <end position="178"/>
    </location>
    <ligand>
        <name>ATP</name>
        <dbReference type="ChEBI" id="CHEBI:30616"/>
    </ligand>
</feature>
<feature type="binding site" evidence="1">
    <location>
        <begin position="219"/>
        <end position="225"/>
    </location>
    <ligand>
        <name>ATP</name>
        <dbReference type="ChEBI" id="CHEBI:30616"/>
    </ligand>
</feature>
<accession>Q82C83</accession>
<protein>
    <recommendedName>
        <fullName evidence="1">Glutamate 5-kinase</fullName>
        <ecNumber evidence="1">2.7.2.11</ecNumber>
    </recommendedName>
    <alternativeName>
        <fullName evidence="1">Gamma-glutamyl kinase</fullName>
        <shortName evidence="1">GK</shortName>
    </alternativeName>
</protein>
<sequence>MSAARQGVAQARRIVVKVGSSSLTTAAGGLDADRVDALVDVLAKSRSGGEKEIVLVSSGAIAAGLAPLGLRRRPKDLARQQAAASVGQGLLVARYTASCARHGIRVGQVLLTSDDTSRRAHHRNASRTLDKLLAMGALPVVNENDTVATDEIRFGDNDRLAALVAHLVRADLLVLLSDVDGVYDGDPSKPGTSRVAQVHGPQDLAHVEIGSAGRAGVGTGGMVTKIEAARIAAAAGIPVVLTSAVHAADALAGRDTGTYFHPTGKRSADRLLWLQHASTPQGALTLDDGAVRAVVERRKSLLPAGIAAVEGEFTAGDPVELRDSEGRAVARGLVSFDAKEIPQLLGRSTRELARELGPAYEREVVHRDDLVLLQP</sequence>
<proteinExistence type="inferred from homology"/>
<keyword id="KW-0028">Amino-acid biosynthesis</keyword>
<keyword id="KW-0067">ATP-binding</keyword>
<keyword id="KW-0963">Cytoplasm</keyword>
<keyword id="KW-0418">Kinase</keyword>
<keyword id="KW-0547">Nucleotide-binding</keyword>
<keyword id="KW-0641">Proline biosynthesis</keyword>
<keyword id="KW-1185">Reference proteome</keyword>
<keyword id="KW-0808">Transferase</keyword>
<evidence type="ECO:0000255" key="1">
    <source>
        <dbReference type="HAMAP-Rule" id="MF_00456"/>
    </source>
</evidence>
<name>PROB_STRAW</name>
<gene>
    <name evidence="1" type="primary">proB</name>
    <name type="ordered locus">SAV_5471</name>
</gene>
<reference key="1">
    <citation type="journal article" date="2001" name="Proc. Natl. Acad. Sci. U.S.A.">
        <title>Genome sequence of an industrial microorganism Streptomyces avermitilis: deducing the ability of producing secondary metabolites.</title>
        <authorList>
            <person name="Omura S."/>
            <person name="Ikeda H."/>
            <person name="Ishikawa J."/>
            <person name="Hanamoto A."/>
            <person name="Takahashi C."/>
            <person name="Shinose M."/>
            <person name="Takahashi Y."/>
            <person name="Horikawa H."/>
            <person name="Nakazawa H."/>
            <person name="Osonoe T."/>
            <person name="Kikuchi H."/>
            <person name="Shiba T."/>
            <person name="Sakaki Y."/>
            <person name="Hattori M."/>
        </authorList>
    </citation>
    <scope>NUCLEOTIDE SEQUENCE [LARGE SCALE GENOMIC DNA]</scope>
    <source>
        <strain>ATCC 31267 / DSM 46492 / JCM 5070 / NBRC 14893 / NCIMB 12804 / NRRL 8165 / MA-4680</strain>
    </source>
</reference>
<reference key="2">
    <citation type="journal article" date="2003" name="Nat. Biotechnol.">
        <title>Complete genome sequence and comparative analysis of the industrial microorganism Streptomyces avermitilis.</title>
        <authorList>
            <person name="Ikeda H."/>
            <person name="Ishikawa J."/>
            <person name="Hanamoto A."/>
            <person name="Shinose M."/>
            <person name="Kikuchi H."/>
            <person name="Shiba T."/>
            <person name="Sakaki Y."/>
            <person name="Hattori M."/>
            <person name="Omura S."/>
        </authorList>
    </citation>
    <scope>NUCLEOTIDE SEQUENCE [LARGE SCALE GENOMIC DNA]</scope>
    <source>
        <strain>ATCC 31267 / DSM 46492 / JCM 5070 / NBRC 14893 / NCIMB 12804 / NRRL 8165 / MA-4680</strain>
    </source>
</reference>
<comment type="function">
    <text evidence="1">Catalyzes the transfer of a phosphate group to glutamate to form L-glutamate 5-phosphate.</text>
</comment>
<comment type="catalytic activity">
    <reaction evidence="1">
        <text>L-glutamate + ATP = L-glutamyl 5-phosphate + ADP</text>
        <dbReference type="Rhea" id="RHEA:14877"/>
        <dbReference type="ChEBI" id="CHEBI:29985"/>
        <dbReference type="ChEBI" id="CHEBI:30616"/>
        <dbReference type="ChEBI" id="CHEBI:58274"/>
        <dbReference type="ChEBI" id="CHEBI:456216"/>
        <dbReference type="EC" id="2.7.2.11"/>
    </reaction>
</comment>
<comment type="pathway">
    <text evidence="1">Amino-acid biosynthesis; L-proline biosynthesis; L-glutamate 5-semialdehyde from L-glutamate: step 1/2.</text>
</comment>
<comment type="subcellular location">
    <subcellularLocation>
        <location evidence="1">Cytoplasm</location>
    </subcellularLocation>
</comment>
<comment type="similarity">
    <text evidence="1">Belongs to the glutamate 5-kinase family.</text>
</comment>
<dbReference type="EC" id="2.7.2.11" evidence="1"/>
<dbReference type="EMBL" id="BA000030">
    <property type="protein sequence ID" value="BAC73183.1"/>
    <property type="molecule type" value="Genomic_DNA"/>
</dbReference>
<dbReference type="RefSeq" id="WP_010986873.1">
    <property type="nucleotide sequence ID" value="NZ_BAVY01000014.1"/>
</dbReference>
<dbReference type="SMR" id="Q82C83"/>
<dbReference type="KEGG" id="sma:SAVERM_5471"/>
<dbReference type="eggNOG" id="COG0263">
    <property type="taxonomic scope" value="Bacteria"/>
</dbReference>
<dbReference type="HOGENOM" id="CLU_025400_2_0_11"/>
<dbReference type="UniPathway" id="UPA00098">
    <property type="reaction ID" value="UER00359"/>
</dbReference>
<dbReference type="Proteomes" id="UP000000428">
    <property type="component" value="Chromosome"/>
</dbReference>
<dbReference type="GO" id="GO:0005829">
    <property type="term" value="C:cytosol"/>
    <property type="evidence" value="ECO:0007669"/>
    <property type="project" value="TreeGrafter"/>
</dbReference>
<dbReference type="GO" id="GO:0005524">
    <property type="term" value="F:ATP binding"/>
    <property type="evidence" value="ECO:0007669"/>
    <property type="project" value="UniProtKB-KW"/>
</dbReference>
<dbReference type="GO" id="GO:0004349">
    <property type="term" value="F:glutamate 5-kinase activity"/>
    <property type="evidence" value="ECO:0007669"/>
    <property type="project" value="UniProtKB-UniRule"/>
</dbReference>
<dbReference type="GO" id="GO:0003723">
    <property type="term" value="F:RNA binding"/>
    <property type="evidence" value="ECO:0007669"/>
    <property type="project" value="InterPro"/>
</dbReference>
<dbReference type="GO" id="GO:0055129">
    <property type="term" value="P:L-proline biosynthetic process"/>
    <property type="evidence" value="ECO:0007669"/>
    <property type="project" value="UniProtKB-UniRule"/>
</dbReference>
<dbReference type="CDD" id="cd04242">
    <property type="entry name" value="AAK_G5K_ProB"/>
    <property type="match status" value="1"/>
</dbReference>
<dbReference type="CDD" id="cd21157">
    <property type="entry name" value="PUA_G5K"/>
    <property type="match status" value="1"/>
</dbReference>
<dbReference type="FunFam" id="3.40.1160.10:FF:000018">
    <property type="entry name" value="Glutamate 5-kinase"/>
    <property type="match status" value="1"/>
</dbReference>
<dbReference type="Gene3D" id="3.40.1160.10">
    <property type="entry name" value="Acetylglutamate kinase-like"/>
    <property type="match status" value="2"/>
</dbReference>
<dbReference type="Gene3D" id="2.30.130.10">
    <property type="entry name" value="PUA domain"/>
    <property type="match status" value="1"/>
</dbReference>
<dbReference type="HAMAP" id="MF_00456">
    <property type="entry name" value="ProB"/>
    <property type="match status" value="1"/>
</dbReference>
<dbReference type="InterPro" id="IPR036393">
    <property type="entry name" value="AceGlu_kinase-like_sf"/>
</dbReference>
<dbReference type="InterPro" id="IPR001048">
    <property type="entry name" value="Asp/Glu/Uridylate_kinase"/>
</dbReference>
<dbReference type="InterPro" id="IPR041739">
    <property type="entry name" value="G5K_ProB"/>
</dbReference>
<dbReference type="InterPro" id="IPR001057">
    <property type="entry name" value="Glu/AcGlu_kinase"/>
</dbReference>
<dbReference type="InterPro" id="IPR011529">
    <property type="entry name" value="Glu_5kinase"/>
</dbReference>
<dbReference type="InterPro" id="IPR005715">
    <property type="entry name" value="Glu_5kinase/COase_Synthase"/>
</dbReference>
<dbReference type="InterPro" id="IPR019797">
    <property type="entry name" value="Glutamate_5-kinase_CS"/>
</dbReference>
<dbReference type="InterPro" id="IPR002478">
    <property type="entry name" value="PUA"/>
</dbReference>
<dbReference type="InterPro" id="IPR015947">
    <property type="entry name" value="PUA-like_sf"/>
</dbReference>
<dbReference type="InterPro" id="IPR036974">
    <property type="entry name" value="PUA_sf"/>
</dbReference>
<dbReference type="NCBIfam" id="TIGR01027">
    <property type="entry name" value="proB"/>
    <property type="match status" value="1"/>
</dbReference>
<dbReference type="PANTHER" id="PTHR43654">
    <property type="entry name" value="GLUTAMATE 5-KINASE"/>
    <property type="match status" value="1"/>
</dbReference>
<dbReference type="PANTHER" id="PTHR43654:SF1">
    <property type="entry name" value="ISOPENTENYL PHOSPHATE KINASE"/>
    <property type="match status" value="1"/>
</dbReference>
<dbReference type="Pfam" id="PF00696">
    <property type="entry name" value="AA_kinase"/>
    <property type="match status" value="1"/>
</dbReference>
<dbReference type="Pfam" id="PF01472">
    <property type="entry name" value="PUA"/>
    <property type="match status" value="1"/>
</dbReference>
<dbReference type="PIRSF" id="PIRSF000729">
    <property type="entry name" value="GK"/>
    <property type="match status" value="1"/>
</dbReference>
<dbReference type="PRINTS" id="PR00474">
    <property type="entry name" value="GLU5KINASE"/>
</dbReference>
<dbReference type="SMART" id="SM00359">
    <property type="entry name" value="PUA"/>
    <property type="match status" value="1"/>
</dbReference>
<dbReference type="SUPFAM" id="SSF53633">
    <property type="entry name" value="Carbamate kinase-like"/>
    <property type="match status" value="1"/>
</dbReference>
<dbReference type="SUPFAM" id="SSF88697">
    <property type="entry name" value="PUA domain-like"/>
    <property type="match status" value="1"/>
</dbReference>
<dbReference type="PROSITE" id="PS00902">
    <property type="entry name" value="GLUTAMATE_5_KINASE"/>
    <property type="match status" value="1"/>
</dbReference>
<dbReference type="PROSITE" id="PS50890">
    <property type="entry name" value="PUA"/>
    <property type="match status" value="1"/>
</dbReference>